<sequence length="143" mass="14907">MAKKIQAYIKLQVKAGQANPSPPVGPALGQHGVNIMEFCKAFNAKTQGQEPGLPTPVIITVYSDRSFTFETKSTPAAVLLKKAAGITSGSARPNSQKVGTVTRAQLEEIAKTKQADLTAADLDAAVRTIAGSARSMGLNVEGV</sequence>
<dbReference type="EMBL" id="CP000744">
    <property type="protein sequence ID" value="ABR86139.1"/>
    <property type="molecule type" value="Genomic_DNA"/>
</dbReference>
<dbReference type="RefSeq" id="WP_003093751.1">
    <property type="nucleotide sequence ID" value="NC_009656.1"/>
</dbReference>
<dbReference type="SMR" id="A6UZH7"/>
<dbReference type="GeneID" id="77219187"/>
<dbReference type="KEGG" id="pap:PSPA7_0826"/>
<dbReference type="HOGENOM" id="CLU_074237_2_0_6"/>
<dbReference type="Proteomes" id="UP000001582">
    <property type="component" value="Chromosome"/>
</dbReference>
<dbReference type="GO" id="GO:0022625">
    <property type="term" value="C:cytosolic large ribosomal subunit"/>
    <property type="evidence" value="ECO:0007669"/>
    <property type="project" value="TreeGrafter"/>
</dbReference>
<dbReference type="GO" id="GO:0070180">
    <property type="term" value="F:large ribosomal subunit rRNA binding"/>
    <property type="evidence" value="ECO:0007669"/>
    <property type="project" value="UniProtKB-UniRule"/>
</dbReference>
<dbReference type="GO" id="GO:0003735">
    <property type="term" value="F:structural constituent of ribosome"/>
    <property type="evidence" value="ECO:0007669"/>
    <property type="project" value="InterPro"/>
</dbReference>
<dbReference type="GO" id="GO:0006412">
    <property type="term" value="P:translation"/>
    <property type="evidence" value="ECO:0007669"/>
    <property type="project" value="UniProtKB-UniRule"/>
</dbReference>
<dbReference type="CDD" id="cd00349">
    <property type="entry name" value="Ribosomal_L11"/>
    <property type="match status" value="1"/>
</dbReference>
<dbReference type="FunFam" id="1.10.10.250:FF:000001">
    <property type="entry name" value="50S ribosomal protein L11"/>
    <property type="match status" value="1"/>
</dbReference>
<dbReference type="FunFam" id="3.30.1550.10:FF:000001">
    <property type="entry name" value="50S ribosomal protein L11"/>
    <property type="match status" value="1"/>
</dbReference>
<dbReference type="Gene3D" id="1.10.10.250">
    <property type="entry name" value="Ribosomal protein L11, C-terminal domain"/>
    <property type="match status" value="1"/>
</dbReference>
<dbReference type="Gene3D" id="3.30.1550.10">
    <property type="entry name" value="Ribosomal protein L11/L12, N-terminal domain"/>
    <property type="match status" value="1"/>
</dbReference>
<dbReference type="HAMAP" id="MF_00736">
    <property type="entry name" value="Ribosomal_uL11"/>
    <property type="match status" value="1"/>
</dbReference>
<dbReference type="InterPro" id="IPR000911">
    <property type="entry name" value="Ribosomal_uL11"/>
</dbReference>
<dbReference type="InterPro" id="IPR006519">
    <property type="entry name" value="Ribosomal_uL11_bac-typ"/>
</dbReference>
<dbReference type="InterPro" id="IPR020783">
    <property type="entry name" value="Ribosomal_uL11_C"/>
</dbReference>
<dbReference type="InterPro" id="IPR036769">
    <property type="entry name" value="Ribosomal_uL11_C_sf"/>
</dbReference>
<dbReference type="InterPro" id="IPR020785">
    <property type="entry name" value="Ribosomal_uL11_CS"/>
</dbReference>
<dbReference type="InterPro" id="IPR020784">
    <property type="entry name" value="Ribosomal_uL11_N"/>
</dbReference>
<dbReference type="InterPro" id="IPR036796">
    <property type="entry name" value="Ribosomal_uL11_N_sf"/>
</dbReference>
<dbReference type="NCBIfam" id="TIGR01632">
    <property type="entry name" value="L11_bact"/>
    <property type="match status" value="1"/>
</dbReference>
<dbReference type="PANTHER" id="PTHR11661">
    <property type="entry name" value="60S RIBOSOMAL PROTEIN L12"/>
    <property type="match status" value="1"/>
</dbReference>
<dbReference type="PANTHER" id="PTHR11661:SF1">
    <property type="entry name" value="LARGE RIBOSOMAL SUBUNIT PROTEIN UL11M"/>
    <property type="match status" value="1"/>
</dbReference>
<dbReference type="Pfam" id="PF00298">
    <property type="entry name" value="Ribosomal_L11"/>
    <property type="match status" value="1"/>
</dbReference>
<dbReference type="Pfam" id="PF03946">
    <property type="entry name" value="Ribosomal_L11_N"/>
    <property type="match status" value="1"/>
</dbReference>
<dbReference type="SMART" id="SM00649">
    <property type="entry name" value="RL11"/>
    <property type="match status" value="1"/>
</dbReference>
<dbReference type="SUPFAM" id="SSF54747">
    <property type="entry name" value="Ribosomal L11/L12e N-terminal domain"/>
    <property type="match status" value="1"/>
</dbReference>
<dbReference type="SUPFAM" id="SSF46906">
    <property type="entry name" value="Ribosomal protein L11, C-terminal domain"/>
    <property type="match status" value="1"/>
</dbReference>
<dbReference type="PROSITE" id="PS00359">
    <property type="entry name" value="RIBOSOMAL_L11"/>
    <property type="match status" value="1"/>
</dbReference>
<gene>
    <name evidence="1" type="primary">rplK</name>
    <name type="ordered locus">PSPA7_0826</name>
</gene>
<feature type="chain" id="PRO_1000046242" description="Large ribosomal subunit protein uL11">
    <location>
        <begin position="1"/>
        <end position="143"/>
    </location>
</feature>
<reference key="1">
    <citation type="submission" date="2007-06" db="EMBL/GenBank/DDBJ databases">
        <authorList>
            <person name="Dodson R.J."/>
            <person name="Harkins D."/>
            <person name="Paulsen I.T."/>
        </authorList>
    </citation>
    <scope>NUCLEOTIDE SEQUENCE [LARGE SCALE GENOMIC DNA]</scope>
    <source>
        <strain>DSM 24068 / PA7</strain>
    </source>
</reference>
<evidence type="ECO:0000255" key="1">
    <source>
        <dbReference type="HAMAP-Rule" id="MF_00736"/>
    </source>
</evidence>
<evidence type="ECO:0000305" key="2"/>
<proteinExistence type="inferred from homology"/>
<comment type="function">
    <text evidence="1">Forms part of the ribosomal stalk which helps the ribosome interact with GTP-bound translation factors.</text>
</comment>
<comment type="subunit">
    <text evidence="1">Part of the ribosomal stalk of the 50S ribosomal subunit. Interacts with L10 and the large rRNA to form the base of the stalk. L10 forms an elongated spine to which L12 dimers bind in a sequential fashion forming a multimeric L10(L12)X complex.</text>
</comment>
<comment type="PTM">
    <text evidence="1">One or more lysine residues are methylated.</text>
</comment>
<comment type="similarity">
    <text evidence="1">Belongs to the universal ribosomal protein uL11 family.</text>
</comment>
<accession>A6UZH7</accession>
<protein>
    <recommendedName>
        <fullName evidence="1">Large ribosomal subunit protein uL11</fullName>
    </recommendedName>
    <alternativeName>
        <fullName evidence="2">50S ribosomal protein L11</fullName>
    </alternativeName>
</protein>
<keyword id="KW-0488">Methylation</keyword>
<keyword id="KW-0687">Ribonucleoprotein</keyword>
<keyword id="KW-0689">Ribosomal protein</keyword>
<keyword id="KW-0694">RNA-binding</keyword>
<keyword id="KW-0699">rRNA-binding</keyword>
<organism>
    <name type="scientific">Pseudomonas paraeruginosa (strain DSM 24068 / PA7)</name>
    <name type="common">Pseudomonas aeruginosa (strain PA7)</name>
    <dbReference type="NCBI Taxonomy" id="381754"/>
    <lineage>
        <taxon>Bacteria</taxon>
        <taxon>Pseudomonadati</taxon>
        <taxon>Pseudomonadota</taxon>
        <taxon>Gammaproteobacteria</taxon>
        <taxon>Pseudomonadales</taxon>
        <taxon>Pseudomonadaceae</taxon>
        <taxon>Pseudomonas</taxon>
        <taxon>Pseudomonas paraeruginosa</taxon>
    </lineage>
</organism>
<name>RL11_PSEP7</name>